<reference key="1">
    <citation type="journal article" date="2003" name="J. Bacteriol.">
        <title>Comparative analyses of the complete genome sequences of Pierce's disease and citrus variegated chlorosis strains of Xylella fastidiosa.</title>
        <authorList>
            <person name="Van Sluys M.A."/>
            <person name="de Oliveira M.C."/>
            <person name="Monteiro-Vitorello C.B."/>
            <person name="Miyaki C.Y."/>
            <person name="Furlan L.R."/>
            <person name="Camargo L.E.A."/>
            <person name="da Silva A.C.R."/>
            <person name="Moon D.H."/>
            <person name="Takita M.A."/>
            <person name="Lemos E.G.M."/>
            <person name="Machado M.A."/>
            <person name="Ferro M.I.T."/>
            <person name="da Silva F.R."/>
            <person name="Goldman M.H.S."/>
            <person name="Goldman G.H."/>
            <person name="Lemos M.V.F."/>
            <person name="El-Dorry H."/>
            <person name="Tsai S.M."/>
            <person name="Carrer H."/>
            <person name="Carraro D.M."/>
            <person name="de Oliveira R.C."/>
            <person name="Nunes L.R."/>
            <person name="Siqueira W.J."/>
            <person name="Coutinho L.L."/>
            <person name="Kimura E.T."/>
            <person name="Ferro E.S."/>
            <person name="Harakava R."/>
            <person name="Kuramae E.E."/>
            <person name="Marino C.L."/>
            <person name="Giglioti E."/>
            <person name="Abreu I.L."/>
            <person name="Alves L.M.C."/>
            <person name="do Amaral A.M."/>
            <person name="Baia G.S."/>
            <person name="Blanco S.R."/>
            <person name="Brito M.S."/>
            <person name="Cannavan F.S."/>
            <person name="Celestino A.V."/>
            <person name="da Cunha A.F."/>
            <person name="Fenille R.C."/>
            <person name="Ferro J.A."/>
            <person name="Formighieri E.F."/>
            <person name="Kishi L.T."/>
            <person name="Leoni S.G."/>
            <person name="Oliveira A.R."/>
            <person name="Rosa V.E. Jr."/>
            <person name="Sassaki F.T."/>
            <person name="Sena J.A.D."/>
            <person name="de Souza A.A."/>
            <person name="Truffi D."/>
            <person name="Tsukumo F."/>
            <person name="Yanai G.M."/>
            <person name="Zaros L.G."/>
            <person name="Civerolo E.L."/>
            <person name="Simpson A.J.G."/>
            <person name="Almeida N.F. Jr."/>
            <person name="Setubal J.C."/>
            <person name="Kitajima J.P."/>
        </authorList>
    </citation>
    <scope>NUCLEOTIDE SEQUENCE [LARGE SCALE GENOMIC DNA]</scope>
    <source>
        <strain>Temecula1 / ATCC 700964</strain>
    </source>
</reference>
<organism>
    <name type="scientific">Xylella fastidiosa (strain Temecula1 / ATCC 700964)</name>
    <dbReference type="NCBI Taxonomy" id="183190"/>
    <lineage>
        <taxon>Bacteria</taxon>
        <taxon>Pseudomonadati</taxon>
        <taxon>Pseudomonadota</taxon>
        <taxon>Gammaproteobacteria</taxon>
        <taxon>Lysobacterales</taxon>
        <taxon>Lysobacteraceae</taxon>
        <taxon>Xylella</taxon>
    </lineage>
</organism>
<sequence length="565" mass="64379">MNQTRVLLIFSWLTVATLLWMDWSKNKNETLEISASHNLGVDSNLELEHAVPQIHAGAVPLQKDSQLIAAAPKVPVINVTTDVLQLKLDGFSILAADLLRFPQSKDRGAKPIKLLTDDPNYPYSATTGWVSQSNSPVPNLSTFLPEQPDVSYKLANDQNRLVVPFIWTAANGVSIRRTFTFERGRYAILIRDEIRNSGETPWNAYVFRKLSRVPIPNILNRAMTNPDSFSFNGAVWYSEKGGYERRAFKDYMNDGGLNREIGGGWIALLQHHFFTAWIPQKDQASLYLLAQNGSRDIAELRGPAFTVAPGQTTTTEARLWVGPKLVEQITKEHVKGLDRVVDYSRFQLMALIGQGLFWILSHLNSLLHNWGWAIVGLVVLLRIAMYPLSASQYKSAAKMRKFQPRLQQLKERYGEDRQKFQQAMMELYKKEKINPMGGCFPILIQMPIFFALYWVLVESVELRQAPWLGWIQDLTTRDPYFILPLLNIVIMWATQKLTPTPAGMDPIAGKMMQVMPLIFGVMMAFVPSGLALYWVINGGLNLLIQWWMIRQHADFSRKRSRENIK</sequence>
<dbReference type="EMBL" id="AE009442">
    <property type="protein sequence ID" value="AAO29940.1"/>
    <property type="molecule type" value="Genomic_DNA"/>
</dbReference>
<dbReference type="RefSeq" id="WP_004087831.1">
    <property type="nucleotide sequence ID" value="NC_004556.1"/>
</dbReference>
<dbReference type="SMR" id="Q879S3"/>
<dbReference type="GeneID" id="93905996"/>
<dbReference type="KEGG" id="xft:PD_2121"/>
<dbReference type="HOGENOM" id="CLU_016535_3_0_6"/>
<dbReference type="Proteomes" id="UP000002516">
    <property type="component" value="Chromosome"/>
</dbReference>
<dbReference type="GO" id="GO:0005886">
    <property type="term" value="C:plasma membrane"/>
    <property type="evidence" value="ECO:0007669"/>
    <property type="project" value="UniProtKB-SubCell"/>
</dbReference>
<dbReference type="GO" id="GO:0032977">
    <property type="term" value="F:membrane insertase activity"/>
    <property type="evidence" value="ECO:0007669"/>
    <property type="project" value="InterPro"/>
</dbReference>
<dbReference type="GO" id="GO:0051205">
    <property type="term" value="P:protein insertion into membrane"/>
    <property type="evidence" value="ECO:0007669"/>
    <property type="project" value="TreeGrafter"/>
</dbReference>
<dbReference type="GO" id="GO:0015031">
    <property type="term" value="P:protein transport"/>
    <property type="evidence" value="ECO:0007669"/>
    <property type="project" value="UniProtKB-KW"/>
</dbReference>
<dbReference type="CDD" id="cd20070">
    <property type="entry name" value="5TM_YidC_Alb3"/>
    <property type="match status" value="1"/>
</dbReference>
<dbReference type="CDD" id="cd19961">
    <property type="entry name" value="EcYidC-like_peri"/>
    <property type="match status" value="1"/>
</dbReference>
<dbReference type="Gene3D" id="2.70.98.90">
    <property type="match status" value="1"/>
</dbReference>
<dbReference type="HAMAP" id="MF_01810">
    <property type="entry name" value="YidC_type1"/>
    <property type="match status" value="1"/>
</dbReference>
<dbReference type="InterPro" id="IPR019998">
    <property type="entry name" value="Membr_insert_YidC"/>
</dbReference>
<dbReference type="InterPro" id="IPR028053">
    <property type="entry name" value="Membr_insert_YidC_N"/>
</dbReference>
<dbReference type="InterPro" id="IPR001708">
    <property type="entry name" value="YidC/ALB3/OXA1/COX18"/>
</dbReference>
<dbReference type="InterPro" id="IPR028055">
    <property type="entry name" value="YidC/Oxa/ALB_C"/>
</dbReference>
<dbReference type="InterPro" id="IPR047196">
    <property type="entry name" value="YidC_ALB_C"/>
</dbReference>
<dbReference type="InterPro" id="IPR038221">
    <property type="entry name" value="YidC_periplasmic_sf"/>
</dbReference>
<dbReference type="NCBIfam" id="NF002352">
    <property type="entry name" value="PRK01318.1-3"/>
    <property type="match status" value="1"/>
</dbReference>
<dbReference type="NCBIfam" id="TIGR03593">
    <property type="entry name" value="yidC_nterm"/>
    <property type="match status" value="1"/>
</dbReference>
<dbReference type="NCBIfam" id="TIGR03592">
    <property type="entry name" value="yidC_oxa1_cterm"/>
    <property type="match status" value="1"/>
</dbReference>
<dbReference type="PANTHER" id="PTHR12428:SF65">
    <property type="entry name" value="CYTOCHROME C OXIDASE ASSEMBLY PROTEIN COX18, MITOCHONDRIAL"/>
    <property type="match status" value="1"/>
</dbReference>
<dbReference type="PANTHER" id="PTHR12428">
    <property type="entry name" value="OXA1"/>
    <property type="match status" value="1"/>
</dbReference>
<dbReference type="Pfam" id="PF02096">
    <property type="entry name" value="60KD_IMP"/>
    <property type="match status" value="1"/>
</dbReference>
<dbReference type="Pfam" id="PF14849">
    <property type="entry name" value="YidC_periplas"/>
    <property type="match status" value="1"/>
</dbReference>
<dbReference type="PRINTS" id="PR00701">
    <property type="entry name" value="60KDINNERMP"/>
</dbReference>
<dbReference type="PRINTS" id="PR01900">
    <property type="entry name" value="YIDCPROTEIN"/>
</dbReference>
<evidence type="ECO:0000255" key="1">
    <source>
        <dbReference type="HAMAP-Rule" id="MF_01810"/>
    </source>
</evidence>
<name>YIDC_XYLFT</name>
<comment type="function">
    <text evidence="1">Required for the insertion and/or proper folding and/or complex formation of integral membrane proteins into the membrane. Involved in integration of membrane proteins that insert both dependently and independently of the Sec translocase complex, as well as at least some lipoproteins. Aids folding of multispanning membrane proteins.</text>
</comment>
<comment type="subunit">
    <text evidence="1">Interacts with the Sec translocase complex via SecD. Specifically interacts with transmembrane segments of nascent integral membrane proteins during membrane integration.</text>
</comment>
<comment type="subcellular location">
    <subcellularLocation>
        <location evidence="1">Cell inner membrane</location>
        <topology evidence="1">Multi-pass membrane protein</topology>
    </subcellularLocation>
</comment>
<comment type="similarity">
    <text evidence="1">Belongs to the OXA1/ALB3/YidC family. Type 1 subfamily.</text>
</comment>
<feature type="chain" id="PRO_0000124774" description="Membrane protein insertase YidC">
    <location>
        <begin position="1"/>
        <end position="565"/>
    </location>
</feature>
<feature type="transmembrane region" description="Helical" evidence="1">
    <location>
        <begin position="6"/>
        <end position="26"/>
    </location>
</feature>
<feature type="transmembrane region" description="Helical" evidence="1">
    <location>
        <begin position="348"/>
        <end position="368"/>
    </location>
</feature>
<feature type="transmembrane region" description="Helical" evidence="1">
    <location>
        <begin position="370"/>
        <end position="390"/>
    </location>
</feature>
<feature type="transmembrane region" description="Helical" evidence="1">
    <location>
        <begin position="437"/>
        <end position="457"/>
    </location>
</feature>
<feature type="transmembrane region" description="Helical" evidence="1">
    <location>
        <begin position="479"/>
        <end position="499"/>
    </location>
</feature>
<feature type="transmembrane region" description="Helical" evidence="1">
    <location>
        <begin position="516"/>
        <end position="536"/>
    </location>
</feature>
<accession>Q879S3</accession>
<gene>
    <name evidence="1" type="primary">yidC</name>
    <name type="ordered locus">PD_2121</name>
</gene>
<proteinExistence type="inferred from homology"/>
<protein>
    <recommendedName>
        <fullName evidence="1">Membrane protein insertase YidC</fullName>
    </recommendedName>
    <alternativeName>
        <fullName evidence="1">Foldase YidC</fullName>
    </alternativeName>
    <alternativeName>
        <fullName evidence="1">Membrane integrase YidC</fullName>
    </alternativeName>
    <alternativeName>
        <fullName evidence="1">Membrane protein YidC</fullName>
    </alternativeName>
</protein>
<keyword id="KW-0997">Cell inner membrane</keyword>
<keyword id="KW-1003">Cell membrane</keyword>
<keyword id="KW-0143">Chaperone</keyword>
<keyword id="KW-0472">Membrane</keyword>
<keyword id="KW-0653">Protein transport</keyword>
<keyword id="KW-1185">Reference proteome</keyword>
<keyword id="KW-0812">Transmembrane</keyword>
<keyword id="KW-1133">Transmembrane helix</keyword>
<keyword id="KW-0813">Transport</keyword>